<comment type="subcellular location">
    <subcellularLocation>
        <location evidence="4">Cell membrane</location>
        <topology evidence="4">Multi-pass membrane protein</topology>
    </subcellularLocation>
</comment>
<comment type="alternative products">
    <event type="alternative splicing"/>
    <isoform>
        <id>P83118-1</id>
        <name evidence="5">C</name>
        <sequence type="displayed"/>
    </isoform>
    <isoform>
        <id>P83118-2</id>
        <name evidence="5">D</name>
        <sequence type="described" ref="VSP_059298"/>
    </isoform>
</comment>
<comment type="similarity">
    <text evidence="4">Belongs to the G-protein coupled receptor 2 family. Mth subfamily.</text>
</comment>
<name>MTH11_DROME</name>
<feature type="signal peptide" evidence="2">
    <location>
        <begin position="1"/>
        <end position="20"/>
    </location>
</feature>
<feature type="chain" id="PRO_0000013034" description="Probable G-protein coupled receptor Mth-like 11">
    <location>
        <begin position="21"/>
        <end position="532"/>
    </location>
</feature>
<feature type="topological domain" description="Extracellular" evidence="2">
    <location>
        <begin position="21"/>
        <end position="229"/>
    </location>
</feature>
<feature type="transmembrane region" description="Helical; Name=1" evidence="2">
    <location>
        <begin position="230"/>
        <end position="250"/>
    </location>
</feature>
<feature type="topological domain" description="Cytoplasmic" evidence="2">
    <location>
        <begin position="251"/>
        <end position="262"/>
    </location>
</feature>
<feature type="transmembrane region" description="Helical; Name=2" evidence="2">
    <location>
        <begin position="263"/>
        <end position="283"/>
    </location>
</feature>
<feature type="topological domain" description="Extracellular" evidence="2">
    <location>
        <begin position="284"/>
        <end position="290"/>
    </location>
</feature>
<feature type="transmembrane region" description="Helical; Name=3" evidence="2">
    <location>
        <begin position="291"/>
        <end position="311"/>
    </location>
</feature>
<feature type="topological domain" description="Cytoplasmic" evidence="2">
    <location>
        <begin position="312"/>
        <end position="339"/>
    </location>
</feature>
<feature type="transmembrane region" description="Helical; Name=4" evidence="2">
    <location>
        <begin position="340"/>
        <end position="360"/>
    </location>
</feature>
<feature type="topological domain" description="Extracellular" evidence="2">
    <location>
        <begin position="361"/>
        <end position="386"/>
    </location>
</feature>
<feature type="transmembrane region" description="Helical; Name=5" evidence="2">
    <location>
        <begin position="387"/>
        <end position="407"/>
    </location>
</feature>
<feature type="topological domain" description="Cytoplasmic" evidence="2">
    <location>
        <begin position="408"/>
        <end position="439"/>
    </location>
</feature>
<feature type="transmembrane region" description="Helical; Name=6" evidence="2">
    <location>
        <begin position="440"/>
        <end position="460"/>
    </location>
</feature>
<feature type="topological domain" description="Extracellular" evidence="2">
    <location>
        <begin position="461"/>
        <end position="469"/>
    </location>
</feature>
<feature type="transmembrane region" description="Helical; Name=7" evidence="2">
    <location>
        <begin position="470"/>
        <end position="490"/>
    </location>
</feature>
<feature type="topological domain" description="Cytoplasmic" evidence="2">
    <location>
        <begin position="491"/>
        <end position="532"/>
    </location>
</feature>
<feature type="glycosylation site" description="N-linked (GlcNAc...) asparagine" evidence="3">
    <location>
        <position position="42"/>
    </location>
</feature>
<feature type="glycosylation site" description="N-linked (GlcNAc...) asparagine" evidence="3">
    <location>
        <position position="110"/>
    </location>
</feature>
<feature type="glycosylation site" description="N-linked (GlcNAc...) asparagine" evidence="3">
    <location>
        <position position="123"/>
    </location>
</feature>
<feature type="glycosylation site" description="N-linked (GlcNAc...) asparagine" evidence="3">
    <location>
        <position position="166"/>
    </location>
</feature>
<feature type="glycosylation site" description="N-linked (GlcNAc...) asparagine" evidence="3">
    <location>
        <position position="195"/>
    </location>
</feature>
<feature type="glycosylation site" description="N-linked (GlcNAc...) asparagine" evidence="3">
    <location>
        <position position="227"/>
    </location>
</feature>
<feature type="disulfide bond" evidence="1">
    <location>
        <begin position="26"/>
        <end position="80"/>
    </location>
</feature>
<feature type="disulfide bond" evidence="1">
    <location>
        <begin position="82"/>
        <end position="87"/>
    </location>
</feature>
<feature type="disulfide bond" evidence="1">
    <location>
        <begin position="91"/>
        <end position="184"/>
    </location>
</feature>
<feature type="disulfide bond" evidence="1">
    <location>
        <begin position="92"/>
        <end position="103"/>
    </location>
</feature>
<feature type="disulfide bond" evidence="1">
    <location>
        <begin position="145"/>
        <end position="204"/>
    </location>
</feature>
<feature type="splice variant" id="VSP_059298" description="In isoform D.">
    <location>
        <begin position="215"/>
        <end position="231"/>
    </location>
</feature>
<proteinExistence type="inferred from homology"/>
<organism>
    <name type="scientific">Drosophila melanogaster</name>
    <name type="common">Fruit fly</name>
    <dbReference type="NCBI Taxonomy" id="7227"/>
    <lineage>
        <taxon>Eukaryota</taxon>
        <taxon>Metazoa</taxon>
        <taxon>Ecdysozoa</taxon>
        <taxon>Arthropoda</taxon>
        <taxon>Hexapoda</taxon>
        <taxon>Insecta</taxon>
        <taxon>Pterygota</taxon>
        <taxon>Neoptera</taxon>
        <taxon>Endopterygota</taxon>
        <taxon>Diptera</taxon>
        <taxon>Brachycera</taxon>
        <taxon>Muscomorpha</taxon>
        <taxon>Ephydroidea</taxon>
        <taxon>Drosophilidae</taxon>
        <taxon>Drosophila</taxon>
        <taxon>Sophophora</taxon>
    </lineage>
</organism>
<reference key="1">
    <citation type="journal article" date="2000" name="Science">
        <title>The genome sequence of Drosophila melanogaster.</title>
        <authorList>
            <person name="Adams M.D."/>
            <person name="Celniker S.E."/>
            <person name="Holt R.A."/>
            <person name="Evans C.A."/>
            <person name="Gocayne J.D."/>
            <person name="Amanatides P.G."/>
            <person name="Scherer S.E."/>
            <person name="Li P.W."/>
            <person name="Hoskins R.A."/>
            <person name="Galle R.F."/>
            <person name="George R.A."/>
            <person name="Lewis S.E."/>
            <person name="Richards S."/>
            <person name="Ashburner M."/>
            <person name="Henderson S.N."/>
            <person name="Sutton G.G."/>
            <person name="Wortman J.R."/>
            <person name="Yandell M.D."/>
            <person name="Zhang Q."/>
            <person name="Chen L.X."/>
            <person name="Brandon R.C."/>
            <person name="Rogers Y.-H.C."/>
            <person name="Blazej R.G."/>
            <person name="Champe M."/>
            <person name="Pfeiffer B.D."/>
            <person name="Wan K.H."/>
            <person name="Doyle C."/>
            <person name="Baxter E.G."/>
            <person name="Helt G."/>
            <person name="Nelson C.R."/>
            <person name="Miklos G.L.G."/>
            <person name="Abril J.F."/>
            <person name="Agbayani A."/>
            <person name="An H.-J."/>
            <person name="Andrews-Pfannkoch C."/>
            <person name="Baldwin D."/>
            <person name="Ballew R.M."/>
            <person name="Basu A."/>
            <person name="Baxendale J."/>
            <person name="Bayraktaroglu L."/>
            <person name="Beasley E.M."/>
            <person name="Beeson K.Y."/>
            <person name="Benos P.V."/>
            <person name="Berman B.P."/>
            <person name="Bhandari D."/>
            <person name="Bolshakov S."/>
            <person name="Borkova D."/>
            <person name="Botchan M.R."/>
            <person name="Bouck J."/>
            <person name="Brokstein P."/>
            <person name="Brottier P."/>
            <person name="Burtis K.C."/>
            <person name="Busam D.A."/>
            <person name="Butler H."/>
            <person name="Cadieu E."/>
            <person name="Center A."/>
            <person name="Chandra I."/>
            <person name="Cherry J.M."/>
            <person name="Cawley S."/>
            <person name="Dahlke C."/>
            <person name="Davenport L.B."/>
            <person name="Davies P."/>
            <person name="de Pablos B."/>
            <person name="Delcher A."/>
            <person name="Deng Z."/>
            <person name="Mays A.D."/>
            <person name="Dew I."/>
            <person name="Dietz S.M."/>
            <person name="Dodson K."/>
            <person name="Doup L.E."/>
            <person name="Downes M."/>
            <person name="Dugan-Rocha S."/>
            <person name="Dunkov B.C."/>
            <person name="Dunn P."/>
            <person name="Durbin K.J."/>
            <person name="Evangelista C.C."/>
            <person name="Ferraz C."/>
            <person name="Ferriera S."/>
            <person name="Fleischmann W."/>
            <person name="Fosler C."/>
            <person name="Gabrielian A.E."/>
            <person name="Garg N.S."/>
            <person name="Gelbart W.M."/>
            <person name="Glasser K."/>
            <person name="Glodek A."/>
            <person name="Gong F."/>
            <person name="Gorrell J.H."/>
            <person name="Gu Z."/>
            <person name="Guan P."/>
            <person name="Harris M."/>
            <person name="Harris N.L."/>
            <person name="Harvey D.A."/>
            <person name="Heiman T.J."/>
            <person name="Hernandez J.R."/>
            <person name="Houck J."/>
            <person name="Hostin D."/>
            <person name="Houston K.A."/>
            <person name="Howland T.J."/>
            <person name="Wei M.-H."/>
            <person name="Ibegwam C."/>
            <person name="Jalali M."/>
            <person name="Kalush F."/>
            <person name="Karpen G.H."/>
            <person name="Ke Z."/>
            <person name="Kennison J.A."/>
            <person name="Ketchum K.A."/>
            <person name="Kimmel B.E."/>
            <person name="Kodira C.D."/>
            <person name="Kraft C.L."/>
            <person name="Kravitz S."/>
            <person name="Kulp D."/>
            <person name="Lai Z."/>
            <person name="Lasko P."/>
            <person name="Lei Y."/>
            <person name="Levitsky A.A."/>
            <person name="Li J.H."/>
            <person name="Li Z."/>
            <person name="Liang Y."/>
            <person name="Lin X."/>
            <person name="Liu X."/>
            <person name="Mattei B."/>
            <person name="McIntosh T.C."/>
            <person name="McLeod M.P."/>
            <person name="McPherson D."/>
            <person name="Merkulov G."/>
            <person name="Milshina N.V."/>
            <person name="Mobarry C."/>
            <person name="Morris J."/>
            <person name="Moshrefi A."/>
            <person name="Mount S.M."/>
            <person name="Moy M."/>
            <person name="Murphy B."/>
            <person name="Murphy L."/>
            <person name="Muzny D.M."/>
            <person name="Nelson D.L."/>
            <person name="Nelson D.R."/>
            <person name="Nelson K.A."/>
            <person name="Nixon K."/>
            <person name="Nusskern D.R."/>
            <person name="Pacleb J.M."/>
            <person name="Palazzolo M."/>
            <person name="Pittman G.S."/>
            <person name="Pan S."/>
            <person name="Pollard J."/>
            <person name="Puri V."/>
            <person name="Reese M.G."/>
            <person name="Reinert K."/>
            <person name="Remington K."/>
            <person name="Saunders R.D.C."/>
            <person name="Scheeler F."/>
            <person name="Shen H."/>
            <person name="Shue B.C."/>
            <person name="Siden-Kiamos I."/>
            <person name="Simpson M."/>
            <person name="Skupski M.P."/>
            <person name="Smith T.J."/>
            <person name="Spier E."/>
            <person name="Spradling A.C."/>
            <person name="Stapleton M."/>
            <person name="Strong R."/>
            <person name="Sun E."/>
            <person name="Svirskas R."/>
            <person name="Tector C."/>
            <person name="Turner R."/>
            <person name="Venter E."/>
            <person name="Wang A.H."/>
            <person name="Wang X."/>
            <person name="Wang Z.-Y."/>
            <person name="Wassarman D.A."/>
            <person name="Weinstock G.M."/>
            <person name="Weissenbach J."/>
            <person name="Williams S.M."/>
            <person name="Woodage T."/>
            <person name="Worley K.C."/>
            <person name="Wu D."/>
            <person name="Yang S."/>
            <person name="Yao Q.A."/>
            <person name="Ye J."/>
            <person name="Yeh R.-F."/>
            <person name="Zaveri J.S."/>
            <person name="Zhan M."/>
            <person name="Zhang G."/>
            <person name="Zhao Q."/>
            <person name="Zheng L."/>
            <person name="Zheng X.H."/>
            <person name="Zhong F.N."/>
            <person name="Zhong W."/>
            <person name="Zhou X."/>
            <person name="Zhu S.C."/>
            <person name="Zhu X."/>
            <person name="Smith H.O."/>
            <person name="Gibbs R.A."/>
            <person name="Myers E.W."/>
            <person name="Rubin G.M."/>
            <person name="Venter J.C."/>
        </authorList>
    </citation>
    <scope>NUCLEOTIDE SEQUENCE [LARGE SCALE GENOMIC DNA]</scope>
    <source>
        <strain>Berkeley</strain>
    </source>
</reference>
<reference key="2">
    <citation type="journal article" date="2002" name="Genome Biol.">
        <title>Annotation of the Drosophila melanogaster euchromatic genome: a systematic review.</title>
        <authorList>
            <person name="Misra S."/>
            <person name="Crosby M.A."/>
            <person name="Mungall C.J."/>
            <person name="Matthews B.B."/>
            <person name="Campbell K.S."/>
            <person name="Hradecky P."/>
            <person name="Huang Y."/>
            <person name="Kaminker J.S."/>
            <person name="Millburn G.H."/>
            <person name="Prochnik S.E."/>
            <person name="Smith C.D."/>
            <person name="Tupy J.L."/>
            <person name="Whitfield E.J."/>
            <person name="Bayraktaroglu L."/>
            <person name="Berman B.P."/>
            <person name="Bettencourt B.R."/>
            <person name="Celniker S.E."/>
            <person name="de Grey A.D.N.J."/>
            <person name="Drysdale R.A."/>
            <person name="Harris N.L."/>
            <person name="Richter J."/>
            <person name="Russo S."/>
            <person name="Schroeder A.J."/>
            <person name="Shu S.Q."/>
            <person name="Stapleton M."/>
            <person name="Yamada C."/>
            <person name="Ashburner M."/>
            <person name="Gelbart W.M."/>
            <person name="Rubin G.M."/>
            <person name="Lewis S.E."/>
        </authorList>
    </citation>
    <scope>GENOME REANNOTATION</scope>
    <source>
        <strain>Berkeley</strain>
    </source>
</reference>
<reference key="3">
    <citation type="journal article" date="2001" name="Proc. Natl. Acad. Sci. U.S.A.">
        <title>Crystal structure of the ectodomain of Methuselah, a Drosophila G protein-coupled receptor associated with extended lifespan.</title>
        <authorList>
            <person name="West A.P. Jr."/>
            <person name="Llamas L.L."/>
            <person name="Snow P.M."/>
            <person name="Benzer S."/>
            <person name="Bjorkman P.J."/>
        </authorList>
    </citation>
    <scope>IDENTIFICATION</scope>
</reference>
<dbReference type="EMBL" id="AE014297">
    <property type="protein sequence ID" value="AAN13470.3"/>
    <property type="molecule type" value="Genomic_DNA"/>
</dbReference>
<dbReference type="EMBL" id="AE014297">
    <property type="protein sequence ID" value="AGB95847.1"/>
    <property type="molecule type" value="Genomic_DNA"/>
</dbReference>
<dbReference type="RefSeq" id="NP_001262465.1">
    <molecule id="P83118-2"/>
    <property type="nucleotide sequence ID" value="NM_001275536.1"/>
</dbReference>
<dbReference type="RefSeq" id="NP_731479.3">
    <molecule id="P83118-1"/>
    <property type="nucleotide sequence ID" value="NM_169343.4"/>
</dbReference>
<dbReference type="FunCoup" id="P83118">
    <property type="interactions" value="10"/>
</dbReference>
<dbReference type="STRING" id="7227.FBpp0304810"/>
<dbReference type="GlyCosmos" id="P83118">
    <property type="glycosylation" value="6 sites, No reported glycans"/>
</dbReference>
<dbReference type="GlyGen" id="P83118">
    <property type="glycosylation" value="6 sites"/>
</dbReference>
<dbReference type="PaxDb" id="7227-FBpp0304810"/>
<dbReference type="EnsemblMetazoa" id="FBtr0332552">
    <molecule id="P83118-1"/>
    <property type="protein sequence ID" value="FBpp0304810"/>
    <property type="gene ID" value="FBgn0045443"/>
</dbReference>
<dbReference type="EnsemblMetazoa" id="FBtr0332553">
    <molecule id="P83118-2"/>
    <property type="protein sequence ID" value="FBpp0304811"/>
    <property type="gene ID" value="FBgn0045443"/>
</dbReference>
<dbReference type="GeneID" id="117467"/>
<dbReference type="KEGG" id="dme:Dmel_CG31147"/>
<dbReference type="AGR" id="FB:FBgn0045443"/>
<dbReference type="CTD" id="117467"/>
<dbReference type="FlyBase" id="FBgn0045443">
    <property type="gene designation" value="mthl11"/>
</dbReference>
<dbReference type="VEuPathDB" id="VectorBase:FBgn0045443"/>
<dbReference type="eggNOG" id="KOG4193">
    <property type="taxonomic scope" value="Eukaryota"/>
</dbReference>
<dbReference type="GeneTree" id="ENSGT00940000168274"/>
<dbReference type="InParanoid" id="P83118"/>
<dbReference type="OMA" id="WSAMYYF"/>
<dbReference type="OrthoDB" id="6134459at2759"/>
<dbReference type="PhylomeDB" id="P83118"/>
<dbReference type="BioGRID-ORCS" id="117467">
    <property type="hits" value="0 hits in 1 CRISPR screen"/>
</dbReference>
<dbReference type="GenomeRNAi" id="117467"/>
<dbReference type="PRO" id="PR:P83118"/>
<dbReference type="Proteomes" id="UP000000803">
    <property type="component" value="Chromosome 3R"/>
</dbReference>
<dbReference type="Bgee" id="FBgn0045443">
    <property type="expression patterns" value="Expressed in proctodeum and 2 other cell types or tissues"/>
</dbReference>
<dbReference type="ExpressionAtlas" id="P83118">
    <property type="expression patterns" value="baseline and differential"/>
</dbReference>
<dbReference type="GO" id="GO:0016020">
    <property type="term" value="C:membrane"/>
    <property type="evidence" value="ECO:0000250"/>
    <property type="project" value="FlyBase"/>
</dbReference>
<dbReference type="GO" id="GO:0005886">
    <property type="term" value="C:plasma membrane"/>
    <property type="evidence" value="ECO:0000318"/>
    <property type="project" value="GO_Central"/>
</dbReference>
<dbReference type="GO" id="GO:0008528">
    <property type="term" value="F:G protein-coupled peptide receptor activity"/>
    <property type="evidence" value="ECO:0000318"/>
    <property type="project" value="GO_Central"/>
</dbReference>
<dbReference type="GO" id="GO:0004930">
    <property type="term" value="F:G protein-coupled receptor activity"/>
    <property type="evidence" value="ECO:0000250"/>
    <property type="project" value="FlyBase"/>
</dbReference>
<dbReference type="GO" id="GO:0007166">
    <property type="term" value="P:cell surface receptor signaling pathway"/>
    <property type="evidence" value="ECO:0007669"/>
    <property type="project" value="InterPro"/>
</dbReference>
<dbReference type="GO" id="GO:0008340">
    <property type="term" value="P:determination of adult lifespan"/>
    <property type="evidence" value="ECO:0000250"/>
    <property type="project" value="UniProtKB"/>
</dbReference>
<dbReference type="GO" id="GO:0007186">
    <property type="term" value="P:G protein-coupled receptor signaling pathway"/>
    <property type="evidence" value="ECO:0000250"/>
    <property type="project" value="FlyBase"/>
</dbReference>
<dbReference type="GO" id="GO:0042594">
    <property type="term" value="P:response to starvation"/>
    <property type="evidence" value="ECO:0000250"/>
    <property type="project" value="UniProtKB"/>
</dbReference>
<dbReference type="CDD" id="cd15039">
    <property type="entry name" value="7tmB3_Methuselah-like"/>
    <property type="match status" value="1"/>
</dbReference>
<dbReference type="CDD" id="cd00251">
    <property type="entry name" value="Mth_Ecto"/>
    <property type="match status" value="1"/>
</dbReference>
<dbReference type="FunFam" id="1.20.1070.10:FF:000297">
    <property type="entry name" value="G-protein coupled receptor Mth"/>
    <property type="match status" value="1"/>
</dbReference>
<dbReference type="FunFam" id="2.170.180.11:FF:000001">
    <property type="entry name" value="G-protein coupled receptor Mth"/>
    <property type="match status" value="1"/>
</dbReference>
<dbReference type="FunFam" id="2.30.160.11:FF:000001">
    <property type="entry name" value="G-protein coupled receptor Mth"/>
    <property type="match status" value="1"/>
</dbReference>
<dbReference type="Gene3D" id="2.30.160.11">
    <property type="match status" value="1"/>
</dbReference>
<dbReference type="Gene3D" id="2.170.180.11">
    <property type="entry name" value="Methuselah ectodomain, domain 2"/>
    <property type="match status" value="1"/>
</dbReference>
<dbReference type="Gene3D" id="1.20.1070.10">
    <property type="entry name" value="Rhodopsin 7-helix transmembrane proteins"/>
    <property type="match status" value="1"/>
</dbReference>
<dbReference type="InterPro" id="IPR017981">
    <property type="entry name" value="GPCR_2-like_7TM"/>
</dbReference>
<dbReference type="InterPro" id="IPR044860">
    <property type="entry name" value="Methusela_ecto_dom_1"/>
</dbReference>
<dbReference type="InterPro" id="IPR023311">
    <property type="entry name" value="Methusela_ecto_dom_2"/>
</dbReference>
<dbReference type="InterPro" id="IPR010596">
    <property type="entry name" value="Methuselah_N_dom"/>
</dbReference>
<dbReference type="InterPro" id="IPR036272">
    <property type="entry name" value="Methuselah_N_sf"/>
</dbReference>
<dbReference type="InterPro" id="IPR051384">
    <property type="entry name" value="Mth_GPCR"/>
</dbReference>
<dbReference type="PANTHER" id="PTHR47154">
    <property type="entry name" value="G-PROTEIN COUPLED RECEPTOR MTH-RELATED"/>
    <property type="match status" value="1"/>
</dbReference>
<dbReference type="PANTHER" id="PTHR47154:SF2">
    <property type="entry name" value="G-PROTEIN COUPLED RECEPTOR MTH-RELATED"/>
    <property type="match status" value="1"/>
</dbReference>
<dbReference type="Pfam" id="PF06652">
    <property type="entry name" value="Methuselah_N"/>
    <property type="match status" value="1"/>
</dbReference>
<dbReference type="SUPFAM" id="SSF81321">
    <property type="entry name" value="Family A G protein-coupled receptor-like"/>
    <property type="match status" value="1"/>
</dbReference>
<dbReference type="SUPFAM" id="SSF63877">
    <property type="entry name" value="Methuselah ectodomain"/>
    <property type="match status" value="1"/>
</dbReference>
<dbReference type="PROSITE" id="PS50261">
    <property type="entry name" value="G_PROTEIN_RECEP_F2_4"/>
    <property type="match status" value="1"/>
</dbReference>
<evidence type="ECO:0000250" key="1">
    <source>
        <dbReference type="UniProtKB" id="O97148"/>
    </source>
</evidence>
<evidence type="ECO:0000255" key="2"/>
<evidence type="ECO:0000255" key="3">
    <source>
        <dbReference type="PROSITE-ProRule" id="PRU00498"/>
    </source>
</evidence>
<evidence type="ECO:0000305" key="4"/>
<evidence type="ECO:0000312" key="5">
    <source>
        <dbReference type="FlyBase" id="FBgn0045443"/>
    </source>
</evidence>
<protein>
    <recommendedName>
        <fullName>Probable G-protein coupled receptor Mth-like 11</fullName>
    </recommendedName>
    <alternativeName>
        <fullName>Protein methuselah-like 11</fullName>
    </alternativeName>
</protein>
<sequence>MGMFRVEYLLLGILVIGVRSRDIPNCDFFDTVQLRESEKLCNGSYRYEDVVIPAKLTGKYDYEIDYDGDRVSVPKHIRGCVCKLKTCIRFCCHHKKLMAGNLCSQDVYENLTYEYTLDITQLNGSVIKKHVLNDMVVQQDLPLPCERHYSLDAETSTYDMWSLYENGSLFRHFDQRYLSKQEFCLQPNPTSTGKNYSLIVAFNCIQKPSMKMAYGRFECVRKSRLSNASIPVKFSSVFFMVITIAAYLWLPKFRSLHGKCCNLYFICLAITFLLNVISLFGIFELKTPICYLTGYAGYFTVMATFLWLSVISFDVWRRFAMRKFQVFYKNKRSSFFNYNIIVWSSAGLLTCIIFLVDQFVETNLDNPYNPAVGVFSCWIFTNGWSATFYFYAPLAILIILNCASFFLTTRYIYVENKQNQKVLNNSEPQKLSRNHANYRIYFRLFIIMGGSWFLEIIAFICEMENMWKPLIILNDYINCSQGIIIFVATFCNHEMFRLIRKRIQNRNITSLELTNTSRPVESEKMADVELGK</sequence>
<accession>P83118</accession>
<accession>A0A0B4KG61</accession>
<accession>Q8INM0</accession>
<keyword id="KW-0025">Alternative splicing</keyword>
<keyword id="KW-1003">Cell membrane</keyword>
<keyword id="KW-1015">Disulfide bond</keyword>
<keyword id="KW-0297">G-protein coupled receptor</keyword>
<keyword id="KW-0325">Glycoprotein</keyword>
<keyword id="KW-0472">Membrane</keyword>
<keyword id="KW-0675">Receptor</keyword>
<keyword id="KW-1185">Reference proteome</keyword>
<keyword id="KW-0732">Signal</keyword>
<keyword id="KW-0807">Transducer</keyword>
<keyword id="KW-0812">Transmembrane</keyword>
<keyword id="KW-1133">Transmembrane helix</keyword>
<gene>
    <name type="primary">mthl11</name>
    <name type="synonym">Mth-like-11</name>
    <name type="ORF">CG31147</name>
</gene>